<keyword id="KW-0028">Amino-acid biosynthesis</keyword>
<keyword id="KW-0067">ATP-binding</keyword>
<keyword id="KW-0963">Cytoplasm</keyword>
<keyword id="KW-0328">Glycosyltransferase</keyword>
<keyword id="KW-0368">Histidine biosynthesis</keyword>
<keyword id="KW-0547">Nucleotide-binding</keyword>
<keyword id="KW-1185">Reference proteome</keyword>
<keyword id="KW-0808">Transferase</keyword>
<sequence length="231" mass="25320">MSVTLALPSKGRLKEQTLAVLDKAGYKVILPDDSRNYRARVEGETDLDILFLSASEIARELGYGSVDLGVTGEDLVRETLAHSEERVAIEAELGFGHADVVVAVPEVWRDVTSMADLDDVAADFRQRHGRRLRIATKYWRLTQQFFSQKHGIQVYRIVESLGATEGAPAAGSADMIVDITSTGSTLRANRLKVLEDGVILRSQACLVSARRARENARVTEVATRIRKGLGG</sequence>
<comment type="function">
    <text evidence="1">Catalyzes the condensation of ATP and 5-phosphoribose 1-diphosphate to form N'-(5'-phosphoribosyl)-ATP (PR-ATP). Has a crucial role in the pathway because the rate of histidine biosynthesis seems to be controlled primarily by regulation of HisG enzymatic activity.</text>
</comment>
<comment type="catalytic activity">
    <reaction evidence="1">
        <text>1-(5-phospho-beta-D-ribosyl)-ATP + diphosphate = 5-phospho-alpha-D-ribose 1-diphosphate + ATP</text>
        <dbReference type="Rhea" id="RHEA:18473"/>
        <dbReference type="ChEBI" id="CHEBI:30616"/>
        <dbReference type="ChEBI" id="CHEBI:33019"/>
        <dbReference type="ChEBI" id="CHEBI:58017"/>
        <dbReference type="ChEBI" id="CHEBI:73183"/>
        <dbReference type="EC" id="2.4.2.17"/>
    </reaction>
</comment>
<comment type="pathway">
    <text evidence="1">Amino-acid biosynthesis; L-histidine biosynthesis; L-histidine from 5-phospho-alpha-D-ribose 1-diphosphate: step 1/9.</text>
</comment>
<comment type="subunit">
    <text evidence="1">Heteromultimer composed of HisG and HisZ subunits.</text>
</comment>
<comment type="subcellular location">
    <subcellularLocation>
        <location evidence="1">Cytoplasm</location>
    </subcellularLocation>
</comment>
<comment type="domain">
    <text>Lacks the C-terminal regulatory region which is replaced by HisZ.</text>
</comment>
<comment type="similarity">
    <text evidence="1">Belongs to the ATP phosphoribosyltransferase family. Short subfamily.</text>
</comment>
<reference key="1">
    <citation type="journal article" date="2011" name="J. Bacteriol.">
        <title>Genome of Ochrobactrum anthropi ATCC 49188 T, a versatile opportunistic pathogen and symbiont of several eukaryotic hosts.</title>
        <authorList>
            <person name="Chain P.S."/>
            <person name="Lang D.M."/>
            <person name="Comerci D.J."/>
            <person name="Malfatti S.A."/>
            <person name="Vergez L.M."/>
            <person name="Shin M."/>
            <person name="Ugalde R.A."/>
            <person name="Garcia E."/>
            <person name="Tolmasky M.E."/>
        </authorList>
    </citation>
    <scope>NUCLEOTIDE SEQUENCE [LARGE SCALE GENOMIC DNA]</scope>
    <source>
        <strain>ATCC 49188 / DSM 6882 / CCUG 24695 / JCM 21032 / LMG 3331 / NBRC 15819 / NCTC 12168 / Alc 37</strain>
    </source>
</reference>
<organism>
    <name type="scientific">Brucella anthropi (strain ATCC 49188 / DSM 6882 / CCUG 24695 / JCM 21032 / LMG 3331 / NBRC 15819 / NCTC 12168 / Alc 37)</name>
    <name type="common">Ochrobactrum anthropi</name>
    <dbReference type="NCBI Taxonomy" id="439375"/>
    <lineage>
        <taxon>Bacteria</taxon>
        <taxon>Pseudomonadati</taxon>
        <taxon>Pseudomonadota</taxon>
        <taxon>Alphaproteobacteria</taxon>
        <taxon>Hyphomicrobiales</taxon>
        <taxon>Brucellaceae</taxon>
        <taxon>Brucella/Ochrobactrum group</taxon>
        <taxon>Brucella</taxon>
    </lineage>
</organism>
<feature type="chain" id="PRO_1000063290" description="ATP phosphoribosyltransferase">
    <location>
        <begin position="1"/>
        <end position="231"/>
    </location>
</feature>
<gene>
    <name evidence="1" type="primary">hisG</name>
    <name type="ordered locus">Oant_3019</name>
</gene>
<proteinExistence type="inferred from homology"/>
<evidence type="ECO:0000255" key="1">
    <source>
        <dbReference type="HAMAP-Rule" id="MF_01018"/>
    </source>
</evidence>
<name>HIS1_BRUA4</name>
<protein>
    <recommendedName>
        <fullName evidence="1">ATP phosphoribosyltransferase</fullName>
        <shortName evidence="1">ATP-PRT</shortName>
        <shortName evidence="1">ATP-PRTase</shortName>
        <ecNumber evidence="1">2.4.2.17</ecNumber>
    </recommendedName>
</protein>
<dbReference type="EC" id="2.4.2.17" evidence="1"/>
<dbReference type="EMBL" id="CP000759">
    <property type="protein sequence ID" value="ABS15727.1"/>
    <property type="molecule type" value="Genomic_DNA"/>
</dbReference>
<dbReference type="RefSeq" id="WP_011982740.1">
    <property type="nucleotide sequence ID" value="NC_009668.1"/>
</dbReference>
<dbReference type="SMR" id="A6X3C3"/>
<dbReference type="STRING" id="439375.Oant_3019"/>
<dbReference type="KEGG" id="oan:Oant_3019"/>
<dbReference type="PATRIC" id="fig|439375.7.peg.3171"/>
<dbReference type="eggNOG" id="COG0040">
    <property type="taxonomic scope" value="Bacteria"/>
</dbReference>
<dbReference type="HOGENOM" id="CLU_038115_0_1_5"/>
<dbReference type="PhylomeDB" id="A6X3C3"/>
<dbReference type="UniPathway" id="UPA00031">
    <property type="reaction ID" value="UER00006"/>
</dbReference>
<dbReference type="Proteomes" id="UP000002301">
    <property type="component" value="Chromosome 2"/>
</dbReference>
<dbReference type="GO" id="GO:0005737">
    <property type="term" value="C:cytoplasm"/>
    <property type="evidence" value="ECO:0007669"/>
    <property type="project" value="UniProtKB-SubCell"/>
</dbReference>
<dbReference type="GO" id="GO:0005524">
    <property type="term" value="F:ATP binding"/>
    <property type="evidence" value="ECO:0007669"/>
    <property type="project" value="UniProtKB-KW"/>
</dbReference>
<dbReference type="GO" id="GO:0003879">
    <property type="term" value="F:ATP phosphoribosyltransferase activity"/>
    <property type="evidence" value="ECO:0007669"/>
    <property type="project" value="UniProtKB-UniRule"/>
</dbReference>
<dbReference type="GO" id="GO:0000105">
    <property type="term" value="P:L-histidine biosynthetic process"/>
    <property type="evidence" value="ECO:0007669"/>
    <property type="project" value="UniProtKB-UniRule"/>
</dbReference>
<dbReference type="CDD" id="cd13593">
    <property type="entry name" value="PBP2_HisGL3"/>
    <property type="match status" value="1"/>
</dbReference>
<dbReference type="Gene3D" id="3.40.190.10">
    <property type="entry name" value="Periplasmic binding protein-like II"/>
    <property type="match status" value="2"/>
</dbReference>
<dbReference type="HAMAP" id="MF_01018">
    <property type="entry name" value="HisG_Short"/>
    <property type="match status" value="1"/>
</dbReference>
<dbReference type="InterPro" id="IPR013820">
    <property type="entry name" value="ATP_PRibTrfase_cat"/>
</dbReference>
<dbReference type="InterPro" id="IPR018198">
    <property type="entry name" value="ATP_PRibTrfase_CS"/>
</dbReference>
<dbReference type="InterPro" id="IPR001348">
    <property type="entry name" value="ATP_PRibTrfase_HisG"/>
</dbReference>
<dbReference type="InterPro" id="IPR024893">
    <property type="entry name" value="ATP_PRibTrfase_HisG_short"/>
</dbReference>
<dbReference type="NCBIfam" id="TIGR00070">
    <property type="entry name" value="hisG"/>
    <property type="match status" value="1"/>
</dbReference>
<dbReference type="PANTHER" id="PTHR21403:SF8">
    <property type="entry name" value="ATP PHOSPHORIBOSYLTRANSFERASE"/>
    <property type="match status" value="1"/>
</dbReference>
<dbReference type="PANTHER" id="PTHR21403">
    <property type="entry name" value="ATP PHOSPHORIBOSYLTRANSFERASE ATP-PRTASE"/>
    <property type="match status" value="1"/>
</dbReference>
<dbReference type="Pfam" id="PF01634">
    <property type="entry name" value="HisG"/>
    <property type="match status" value="1"/>
</dbReference>
<dbReference type="SUPFAM" id="SSF53850">
    <property type="entry name" value="Periplasmic binding protein-like II"/>
    <property type="match status" value="1"/>
</dbReference>
<dbReference type="PROSITE" id="PS01316">
    <property type="entry name" value="ATP_P_PHORIBOSYLTR"/>
    <property type="match status" value="1"/>
</dbReference>
<accession>A6X3C3</accession>